<comment type="function">
    <text evidence="1">Provides the (R)-glutamate required for cell wall biosynthesis.</text>
</comment>
<comment type="catalytic activity">
    <reaction evidence="1">
        <text>L-glutamate = D-glutamate</text>
        <dbReference type="Rhea" id="RHEA:12813"/>
        <dbReference type="ChEBI" id="CHEBI:29985"/>
        <dbReference type="ChEBI" id="CHEBI:29986"/>
        <dbReference type="EC" id="5.1.1.3"/>
    </reaction>
</comment>
<comment type="pathway">
    <text evidence="1">Cell wall biogenesis; peptidoglycan biosynthesis.</text>
</comment>
<comment type="similarity">
    <text evidence="1">Belongs to the aspartate/glutamate racemases family.</text>
</comment>
<sequence length="264" mass="29138">MDNRPIGFLDSGVGGLTVVRELMRQLPHEEIVYIGDSARAPYGPRPAEQIREYTWQLVNFLLTKDVKMIVIACNTATAVVWEEIKAQLDIPVLGVILPGASAAIKSSQGGKIGVIGTPMTVQSDIYRQKIHDLDPDLQVESLACPKFAPLVESGALSTSVTKKVVYETLRPLVGKVDSLILGCTHYPLLRPIIQNVMGPKVQLIDSGAECVRDISVLLNYFEINRGRDAGPLHHRFYTTASSQSFAQIGEEWLEKEIHVEHVEL</sequence>
<evidence type="ECO:0000255" key="1">
    <source>
        <dbReference type="HAMAP-Rule" id="MF_00258"/>
    </source>
</evidence>
<proteinExistence type="inferred from homology"/>
<dbReference type="EC" id="5.1.1.3" evidence="1"/>
<dbReference type="EMBL" id="CP000410">
    <property type="protein sequence ID" value="ABJ54892.1"/>
    <property type="molecule type" value="Genomic_DNA"/>
</dbReference>
<dbReference type="SMR" id="Q04IS7"/>
<dbReference type="BindingDB" id="Q04IS7"/>
<dbReference type="ChEMBL" id="CHEMBL2366487"/>
<dbReference type="PaxDb" id="373153-SPD_1661"/>
<dbReference type="KEGG" id="spd:SPD_1661"/>
<dbReference type="eggNOG" id="COG0796">
    <property type="taxonomic scope" value="Bacteria"/>
</dbReference>
<dbReference type="HOGENOM" id="CLU_052344_0_2_9"/>
<dbReference type="BioCyc" id="SPNE373153:G1G6V-1795-MONOMER"/>
<dbReference type="UniPathway" id="UPA00219"/>
<dbReference type="Proteomes" id="UP000001452">
    <property type="component" value="Chromosome"/>
</dbReference>
<dbReference type="GO" id="GO:0008881">
    <property type="term" value="F:glutamate racemase activity"/>
    <property type="evidence" value="ECO:0007669"/>
    <property type="project" value="UniProtKB-UniRule"/>
</dbReference>
<dbReference type="GO" id="GO:0071555">
    <property type="term" value="P:cell wall organization"/>
    <property type="evidence" value="ECO:0007669"/>
    <property type="project" value="UniProtKB-KW"/>
</dbReference>
<dbReference type="GO" id="GO:0009252">
    <property type="term" value="P:peptidoglycan biosynthetic process"/>
    <property type="evidence" value="ECO:0007669"/>
    <property type="project" value="UniProtKB-UniRule"/>
</dbReference>
<dbReference type="GO" id="GO:0008360">
    <property type="term" value="P:regulation of cell shape"/>
    <property type="evidence" value="ECO:0007669"/>
    <property type="project" value="UniProtKB-KW"/>
</dbReference>
<dbReference type="FunFam" id="3.40.50.1860:FF:000002">
    <property type="entry name" value="Glutamate racemase"/>
    <property type="match status" value="1"/>
</dbReference>
<dbReference type="Gene3D" id="3.40.50.1860">
    <property type="match status" value="2"/>
</dbReference>
<dbReference type="HAMAP" id="MF_00258">
    <property type="entry name" value="Glu_racemase"/>
    <property type="match status" value="1"/>
</dbReference>
<dbReference type="InterPro" id="IPR015942">
    <property type="entry name" value="Asp/Glu/hydantoin_racemase"/>
</dbReference>
<dbReference type="InterPro" id="IPR001920">
    <property type="entry name" value="Asp/Glu_race"/>
</dbReference>
<dbReference type="InterPro" id="IPR018187">
    <property type="entry name" value="Asp/Glu_racemase_AS_1"/>
</dbReference>
<dbReference type="InterPro" id="IPR033134">
    <property type="entry name" value="Asp/Glu_racemase_AS_2"/>
</dbReference>
<dbReference type="InterPro" id="IPR004391">
    <property type="entry name" value="Glu_race"/>
</dbReference>
<dbReference type="NCBIfam" id="TIGR00067">
    <property type="entry name" value="glut_race"/>
    <property type="match status" value="1"/>
</dbReference>
<dbReference type="NCBIfam" id="NF002035">
    <property type="entry name" value="PRK00865.1-3"/>
    <property type="match status" value="1"/>
</dbReference>
<dbReference type="PANTHER" id="PTHR21198">
    <property type="entry name" value="GLUTAMATE RACEMASE"/>
    <property type="match status" value="1"/>
</dbReference>
<dbReference type="PANTHER" id="PTHR21198:SF2">
    <property type="entry name" value="GLUTAMATE RACEMASE"/>
    <property type="match status" value="1"/>
</dbReference>
<dbReference type="Pfam" id="PF01177">
    <property type="entry name" value="Asp_Glu_race"/>
    <property type="match status" value="1"/>
</dbReference>
<dbReference type="SUPFAM" id="SSF53681">
    <property type="entry name" value="Aspartate/glutamate racemase"/>
    <property type="match status" value="2"/>
</dbReference>
<dbReference type="PROSITE" id="PS00923">
    <property type="entry name" value="ASP_GLU_RACEMASE_1"/>
    <property type="match status" value="1"/>
</dbReference>
<dbReference type="PROSITE" id="PS00924">
    <property type="entry name" value="ASP_GLU_RACEMASE_2"/>
    <property type="match status" value="1"/>
</dbReference>
<feature type="chain" id="PRO_1000047621" description="Glutamate racemase">
    <location>
        <begin position="1"/>
        <end position="264"/>
    </location>
</feature>
<feature type="active site" description="Proton donor/acceptor" evidence="1">
    <location>
        <position position="73"/>
    </location>
</feature>
<feature type="active site" description="Proton donor/acceptor" evidence="1">
    <location>
        <position position="183"/>
    </location>
</feature>
<feature type="binding site" evidence="1">
    <location>
        <begin position="10"/>
        <end position="11"/>
    </location>
    <ligand>
        <name>substrate</name>
    </ligand>
</feature>
<feature type="binding site" evidence="1">
    <location>
        <begin position="42"/>
        <end position="43"/>
    </location>
    <ligand>
        <name>substrate</name>
    </ligand>
</feature>
<feature type="binding site" evidence="1">
    <location>
        <begin position="74"/>
        <end position="75"/>
    </location>
    <ligand>
        <name>substrate</name>
    </ligand>
</feature>
<feature type="binding site" evidence="1">
    <location>
        <begin position="184"/>
        <end position="185"/>
    </location>
    <ligand>
        <name>substrate</name>
    </ligand>
</feature>
<name>MURI_STRP2</name>
<organism>
    <name type="scientific">Streptococcus pneumoniae serotype 2 (strain D39 / NCTC 7466)</name>
    <dbReference type="NCBI Taxonomy" id="373153"/>
    <lineage>
        <taxon>Bacteria</taxon>
        <taxon>Bacillati</taxon>
        <taxon>Bacillota</taxon>
        <taxon>Bacilli</taxon>
        <taxon>Lactobacillales</taxon>
        <taxon>Streptococcaceae</taxon>
        <taxon>Streptococcus</taxon>
    </lineage>
</organism>
<reference key="1">
    <citation type="journal article" date="2007" name="J. Bacteriol.">
        <title>Genome sequence of Avery's virulent serotype 2 strain D39 of Streptococcus pneumoniae and comparison with that of unencapsulated laboratory strain R6.</title>
        <authorList>
            <person name="Lanie J.A."/>
            <person name="Ng W.-L."/>
            <person name="Kazmierczak K.M."/>
            <person name="Andrzejewski T.M."/>
            <person name="Davidsen T.M."/>
            <person name="Wayne K.J."/>
            <person name="Tettelin H."/>
            <person name="Glass J.I."/>
            <person name="Winkler M.E."/>
        </authorList>
    </citation>
    <scope>NUCLEOTIDE SEQUENCE [LARGE SCALE GENOMIC DNA]</scope>
    <source>
        <strain>D39 / NCTC 7466</strain>
    </source>
</reference>
<protein>
    <recommendedName>
        <fullName evidence="1">Glutamate racemase</fullName>
        <ecNumber evidence="1">5.1.1.3</ecNumber>
    </recommendedName>
</protein>
<gene>
    <name evidence="1" type="primary">murI</name>
    <name type="ordered locus">SPD_1661</name>
</gene>
<keyword id="KW-0133">Cell shape</keyword>
<keyword id="KW-0961">Cell wall biogenesis/degradation</keyword>
<keyword id="KW-0413">Isomerase</keyword>
<keyword id="KW-0573">Peptidoglycan synthesis</keyword>
<keyword id="KW-1185">Reference proteome</keyword>
<accession>Q04IS7</accession>